<keyword id="KW-0012">Acyltransferase</keyword>
<keyword id="KW-0963">Cytoplasm</keyword>
<keyword id="KW-0408">Iron</keyword>
<keyword id="KW-0479">Metal-binding</keyword>
<keyword id="KW-0808">Transferase</keyword>
<keyword id="KW-0819">tRNA processing</keyword>
<comment type="function">
    <text evidence="1">Required for the formation of a threonylcarbamoyl group on adenosine at position 37 (t(6)A37) in tRNAs that read codons beginning with adenine. Is involved in the transfer of the threonylcarbamoyl moiety of threonylcarbamoyl-AMP (TC-AMP) to the N6 group of A37, together with TsaE and TsaB. TsaD likely plays a direct catalytic role in this reaction.</text>
</comment>
<comment type="catalytic activity">
    <reaction evidence="1">
        <text>L-threonylcarbamoyladenylate + adenosine(37) in tRNA = N(6)-L-threonylcarbamoyladenosine(37) in tRNA + AMP + H(+)</text>
        <dbReference type="Rhea" id="RHEA:37059"/>
        <dbReference type="Rhea" id="RHEA-COMP:10162"/>
        <dbReference type="Rhea" id="RHEA-COMP:10163"/>
        <dbReference type="ChEBI" id="CHEBI:15378"/>
        <dbReference type="ChEBI" id="CHEBI:73682"/>
        <dbReference type="ChEBI" id="CHEBI:74411"/>
        <dbReference type="ChEBI" id="CHEBI:74418"/>
        <dbReference type="ChEBI" id="CHEBI:456215"/>
        <dbReference type="EC" id="2.3.1.234"/>
    </reaction>
</comment>
<comment type="cofactor">
    <cofactor evidence="1">
        <name>Fe(2+)</name>
        <dbReference type="ChEBI" id="CHEBI:29033"/>
    </cofactor>
    <text evidence="1">Binds 1 Fe(2+) ion per subunit.</text>
</comment>
<comment type="subcellular location">
    <subcellularLocation>
        <location evidence="1">Cytoplasm</location>
    </subcellularLocation>
</comment>
<comment type="similarity">
    <text evidence="1">Belongs to the KAE1 / TsaD family.</text>
</comment>
<sequence length="356" mass="38675">MTSSVSTMHNNQDQQTTQLDFITLGIESSCDETGIGLYHSELGLIGHELFSSVKIHAEYGGVVPELASRDHIQRVLPLIKAVLADVKFTLQDLSGIAYTAGPGLAGALLVGCAVAKSLAWSLDIPSLAVHHMEGHLLTPLLEESQPEFPFVALLVSGGHTMLIDVKAIGQYKILGESLDDAVGEAFDKTAKILGLGYPGGPALAMLAEQGNYGAFKFPCPMVGRPGLDFSFSGLKTFVRNTFAKYPSKKEDIAKAFEVATTQTLMIKCRRALEQTKYATLVVAGGVSANLSLRKKLNQMGQKLDVNVFYPRQEFCTDNGAMIALVGYFRLSHGQHDTHHEINIKPRWSLEELSQIE</sequence>
<protein>
    <recommendedName>
        <fullName evidence="1">tRNA N6-adenosine threonylcarbamoyltransferase</fullName>
        <ecNumber evidence="1">2.3.1.234</ecNumber>
    </recommendedName>
    <alternativeName>
        <fullName evidence="1">N6-L-threonylcarbamoyladenine synthase</fullName>
        <shortName evidence="1">t(6)A synthase</shortName>
    </alternativeName>
    <alternativeName>
        <fullName evidence="1">t(6)A37 threonylcarbamoyladenosine biosynthesis protein TsaD</fullName>
    </alternativeName>
    <alternativeName>
        <fullName evidence="1">tRNA threonylcarbamoyladenosine biosynthesis protein TsaD</fullName>
    </alternativeName>
</protein>
<organism>
    <name type="scientific">Ruthia magnifica subsp. Calyptogena magnifica</name>
    <dbReference type="NCBI Taxonomy" id="413404"/>
    <lineage>
        <taxon>Bacteria</taxon>
        <taxon>Pseudomonadati</taxon>
        <taxon>Pseudomonadota</taxon>
        <taxon>Gammaproteobacteria</taxon>
        <taxon>Candidatus Pseudothioglobaceae</taxon>
        <taxon>Candidatus Ruthturnera</taxon>
    </lineage>
</organism>
<gene>
    <name evidence="1" type="primary">tsaD</name>
    <name type="synonym">gcp</name>
    <name type="ordered locus">Rmag_0980</name>
</gene>
<accession>A1AXM9</accession>
<evidence type="ECO:0000255" key="1">
    <source>
        <dbReference type="HAMAP-Rule" id="MF_01445"/>
    </source>
</evidence>
<reference key="1">
    <citation type="journal article" date="2007" name="Science">
        <title>The Calyptogena magnifica chemoautotrophic symbiont genome.</title>
        <authorList>
            <person name="Newton I.L.G."/>
            <person name="Woyke T."/>
            <person name="Auchtung T.A."/>
            <person name="Dilly G.F."/>
            <person name="Dutton R.J."/>
            <person name="Fisher M.C."/>
            <person name="Fontanez K.M."/>
            <person name="Lau E."/>
            <person name="Stewart F.J."/>
            <person name="Richardson P.M."/>
            <person name="Barry K.W."/>
            <person name="Saunders E."/>
            <person name="Detter J.C."/>
            <person name="Wu D."/>
            <person name="Eisen J.A."/>
            <person name="Cavanaugh C.M."/>
        </authorList>
    </citation>
    <scope>NUCLEOTIDE SEQUENCE [LARGE SCALE GENOMIC DNA]</scope>
</reference>
<dbReference type="EC" id="2.3.1.234" evidence="1"/>
<dbReference type="EMBL" id="CP000488">
    <property type="protein sequence ID" value="ABL02686.1"/>
    <property type="molecule type" value="Genomic_DNA"/>
</dbReference>
<dbReference type="SMR" id="A1AXM9"/>
<dbReference type="STRING" id="413404.Rmag_0980"/>
<dbReference type="KEGG" id="rma:Rmag_0980"/>
<dbReference type="eggNOG" id="COG0533">
    <property type="taxonomic scope" value="Bacteria"/>
</dbReference>
<dbReference type="HOGENOM" id="CLU_023208_0_0_6"/>
<dbReference type="Proteomes" id="UP000002587">
    <property type="component" value="Chromosome"/>
</dbReference>
<dbReference type="GO" id="GO:0005737">
    <property type="term" value="C:cytoplasm"/>
    <property type="evidence" value="ECO:0007669"/>
    <property type="project" value="UniProtKB-SubCell"/>
</dbReference>
<dbReference type="GO" id="GO:0005506">
    <property type="term" value="F:iron ion binding"/>
    <property type="evidence" value="ECO:0007669"/>
    <property type="project" value="UniProtKB-UniRule"/>
</dbReference>
<dbReference type="GO" id="GO:0061711">
    <property type="term" value="F:N(6)-L-threonylcarbamoyladenine synthase activity"/>
    <property type="evidence" value="ECO:0007669"/>
    <property type="project" value="UniProtKB-EC"/>
</dbReference>
<dbReference type="GO" id="GO:0002949">
    <property type="term" value="P:tRNA threonylcarbamoyladenosine modification"/>
    <property type="evidence" value="ECO:0007669"/>
    <property type="project" value="UniProtKB-UniRule"/>
</dbReference>
<dbReference type="CDD" id="cd24133">
    <property type="entry name" value="ASKHA_NBD_TsaD_bac"/>
    <property type="match status" value="1"/>
</dbReference>
<dbReference type="FunFam" id="3.30.420.40:FF:000040">
    <property type="entry name" value="tRNA N6-adenosine threonylcarbamoyltransferase"/>
    <property type="match status" value="1"/>
</dbReference>
<dbReference type="Gene3D" id="3.30.420.40">
    <property type="match status" value="2"/>
</dbReference>
<dbReference type="HAMAP" id="MF_01445">
    <property type="entry name" value="TsaD"/>
    <property type="match status" value="1"/>
</dbReference>
<dbReference type="InterPro" id="IPR043129">
    <property type="entry name" value="ATPase_NBD"/>
</dbReference>
<dbReference type="InterPro" id="IPR000905">
    <property type="entry name" value="Gcp-like_dom"/>
</dbReference>
<dbReference type="InterPro" id="IPR017861">
    <property type="entry name" value="KAE1/TsaD"/>
</dbReference>
<dbReference type="InterPro" id="IPR017860">
    <property type="entry name" value="Peptidase_M22_CS"/>
</dbReference>
<dbReference type="InterPro" id="IPR022450">
    <property type="entry name" value="TsaD"/>
</dbReference>
<dbReference type="NCBIfam" id="TIGR00329">
    <property type="entry name" value="gcp_kae1"/>
    <property type="match status" value="1"/>
</dbReference>
<dbReference type="NCBIfam" id="TIGR03723">
    <property type="entry name" value="T6A_TsaD_YgjD"/>
    <property type="match status" value="1"/>
</dbReference>
<dbReference type="PANTHER" id="PTHR11735">
    <property type="entry name" value="TRNA N6-ADENOSINE THREONYLCARBAMOYLTRANSFERASE"/>
    <property type="match status" value="1"/>
</dbReference>
<dbReference type="PANTHER" id="PTHR11735:SF6">
    <property type="entry name" value="TRNA N6-ADENOSINE THREONYLCARBAMOYLTRANSFERASE, MITOCHONDRIAL"/>
    <property type="match status" value="1"/>
</dbReference>
<dbReference type="Pfam" id="PF00814">
    <property type="entry name" value="TsaD"/>
    <property type="match status" value="1"/>
</dbReference>
<dbReference type="PRINTS" id="PR00789">
    <property type="entry name" value="OSIALOPTASE"/>
</dbReference>
<dbReference type="SUPFAM" id="SSF53067">
    <property type="entry name" value="Actin-like ATPase domain"/>
    <property type="match status" value="2"/>
</dbReference>
<dbReference type="PROSITE" id="PS01016">
    <property type="entry name" value="GLYCOPROTEASE"/>
    <property type="match status" value="1"/>
</dbReference>
<feature type="chain" id="PRO_0000303528" description="tRNA N6-adenosine threonylcarbamoyltransferase">
    <location>
        <begin position="1"/>
        <end position="356"/>
    </location>
</feature>
<feature type="binding site" evidence="1">
    <location>
        <position position="131"/>
    </location>
    <ligand>
        <name>Fe cation</name>
        <dbReference type="ChEBI" id="CHEBI:24875"/>
    </ligand>
</feature>
<feature type="binding site" evidence="1">
    <location>
        <position position="135"/>
    </location>
    <ligand>
        <name>Fe cation</name>
        <dbReference type="ChEBI" id="CHEBI:24875"/>
    </ligand>
</feature>
<feature type="binding site" evidence="1">
    <location>
        <begin position="154"/>
        <end position="158"/>
    </location>
    <ligand>
        <name>substrate</name>
    </ligand>
</feature>
<feature type="binding site" evidence="1">
    <location>
        <position position="187"/>
    </location>
    <ligand>
        <name>substrate</name>
    </ligand>
</feature>
<feature type="binding site" evidence="1">
    <location>
        <position position="200"/>
    </location>
    <ligand>
        <name>substrate</name>
    </ligand>
</feature>
<feature type="binding site" evidence="1">
    <location>
        <position position="289"/>
    </location>
    <ligand>
        <name>substrate</name>
    </ligand>
</feature>
<feature type="binding site" evidence="1">
    <location>
        <position position="317"/>
    </location>
    <ligand>
        <name>Fe cation</name>
        <dbReference type="ChEBI" id="CHEBI:24875"/>
    </ligand>
</feature>
<name>TSAD_RUTMC</name>
<proteinExistence type="inferred from homology"/>